<dbReference type="EMBL" id="X14215">
    <property type="protein sequence ID" value="CAA32431.1"/>
    <property type="molecule type" value="Genomic_DNA"/>
</dbReference>
<dbReference type="EMBL" id="X14215">
    <property type="protein sequence ID" value="CAA32436.1"/>
    <property type="molecule type" value="Genomic_DNA"/>
</dbReference>
<dbReference type="EMBL" id="AE014134">
    <property type="protein sequence ID" value="AAN11125.1"/>
    <property type="molecule type" value="Genomic_DNA"/>
</dbReference>
<dbReference type="EMBL" id="AE014134">
    <property type="protein sequence ID" value="AAZ66488.1"/>
    <property type="molecule type" value="Genomic_DNA"/>
</dbReference>
<dbReference type="EMBL" id="AE014134">
    <property type="protein sequence ID" value="AAZ66497.1"/>
    <property type="molecule type" value="Genomic_DNA"/>
</dbReference>
<dbReference type="EMBL" id="AE014134">
    <property type="protein sequence ID" value="AAZ66502.1"/>
    <property type="molecule type" value="Genomic_DNA"/>
</dbReference>
<dbReference type="EMBL" id="AE014134">
    <property type="protein sequence ID" value="AAZ66507.1"/>
    <property type="molecule type" value="Genomic_DNA"/>
</dbReference>
<dbReference type="EMBL" id="AE014134">
    <property type="protein sequence ID" value="AAZ66512.1"/>
    <property type="molecule type" value="Genomic_DNA"/>
</dbReference>
<dbReference type="EMBL" id="AE014134">
    <property type="protein sequence ID" value="AAZ66517.1"/>
    <property type="molecule type" value="Genomic_DNA"/>
</dbReference>
<dbReference type="EMBL" id="AE014134">
    <property type="protein sequence ID" value="AAZ66522.1"/>
    <property type="molecule type" value="Genomic_DNA"/>
</dbReference>
<dbReference type="EMBL" id="AE014134">
    <property type="protein sequence ID" value="AAZ66527.1"/>
    <property type="molecule type" value="Genomic_DNA"/>
</dbReference>
<dbReference type="EMBL" id="AE014134">
    <property type="protein sequence ID" value="AAZ66532.1"/>
    <property type="molecule type" value="Genomic_DNA"/>
</dbReference>
<dbReference type="EMBL" id="AE014134">
    <property type="protein sequence ID" value="AAZ66537.1"/>
    <property type="molecule type" value="Genomic_DNA"/>
</dbReference>
<dbReference type="EMBL" id="AE014134">
    <property type="protein sequence ID" value="AAZ66542.1"/>
    <property type="molecule type" value="Genomic_DNA"/>
</dbReference>
<dbReference type="EMBL" id="AE014134">
    <property type="protein sequence ID" value="AAZ66547.1"/>
    <property type="molecule type" value="Genomic_DNA"/>
</dbReference>
<dbReference type="EMBL" id="AE014134">
    <property type="protein sequence ID" value="AAZ66552.1"/>
    <property type="molecule type" value="Genomic_DNA"/>
</dbReference>
<dbReference type="EMBL" id="AE014134">
    <property type="protein sequence ID" value="AAZ66557.1"/>
    <property type="molecule type" value="Genomic_DNA"/>
</dbReference>
<dbReference type="EMBL" id="AE014134">
    <property type="protein sequence ID" value="AAZ66577.1"/>
    <property type="molecule type" value="Genomic_DNA"/>
</dbReference>
<dbReference type="EMBL" id="AE014134">
    <property type="protein sequence ID" value="AAZ66582.1"/>
    <property type="molecule type" value="Genomic_DNA"/>
</dbReference>
<dbReference type="PIR" id="S10094">
    <property type="entry name" value="HSFF2"/>
</dbReference>
<dbReference type="RefSeq" id="NP_001027292.1">
    <property type="nucleotide sequence ID" value="NM_001032121.2"/>
</dbReference>
<dbReference type="RefSeq" id="NP_001027301.1">
    <property type="nucleotide sequence ID" value="NM_001032130.2"/>
</dbReference>
<dbReference type="RefSeq" id="NP_001027306.1">
    <property type="nucleotide sequence ID" value="NM_001032135.2"/>
</dbReference>
<dbReference type="RefSeq" id="NP_001027311.1">
    <property type="nucleotide sequence ID" value="NM_001032140.2"/>
</dbReference>
<dbReference type="RefSeq" id="NP_001027316.1">
    <property type="nucleotide sequence ID" value="NM_001032145.2"/>
</dbReference>
<dbReference type="RefSeq" id="NP_001027321.1">
    <property type="nucleotide sequence ID" value="NM_001032150.2"/>
</dbReference>
<dbReference type="RefSeq" id="NP_001027326.1">
    <property type="nucleotide sequence ID" value="NM_001032155.2"/>
</dbReference>
<dbReference type="RefSeq" id="NP_001027331.1">
    <property type="nucleotide sequence ID" value="NM_001032160.2"/>
</dbReference>
<dbReference type="RefSeq" id="NP_001027336.1">
    <property type="nucleotide sequence ID" value="NM_001032165.2"/>
</dbReference>
<dbReference type="RefSeq" id="NP_001027341.1">
    <property type="nucleotide sequence ID" value="NM_001032170.2"/>
</dbReference>
<dbReference type="RefSeq" id="NP_001027346.1">
    <property type="nucleotide sequence ID" value="NM_001032175.2"/>
</dbReference>
<dbReference type="RefSeq" id="NP_001027351.1">
    <property type="nucleotide sequence ID" value="NM_001032180.2"/>
</dbReference>
<dbReference type="RefSeq" id="NP_001027356.1">
    <property type="nucleotide sequence ID" value="NM_001032185.2"/>
</dbReference>
<dbReference type="RefSeq" id="NP_001027361.1">
    <property type="nucleotide sequence ID" value="NM_001032190.2"/>
</dbReference>
<dbReference type="RefSeq" id="NP_001027381.1">
    <property type="nucleotide sequence ID" value="NM_001032210.2"/>
</dbReference>
<dbReference type="RefSeq" id="NP_001027386.1">
    <property type="nucleotide sequence ID" value="NM_001032215.2"/>
</dbReference>
<dbReference type="RefSeq" id="NP_724343.1">
    <property type="nucleotide sequence ID" value="NM_165382.3"/>
</dbReference>
<dbReference type="PDB" id="2NQB">
    <property type="method" value="X-ray"/>
    <property type="resolution" value="2.30 A"/>
    <property type="chains" value="C/G=2-124"/>
</dbReference>
<dbReference type="PDB" id="2PYO">
    <property type="method" value="X-ray"/>
    <property type="resolution" value="2.43 A"/>
    <property type="chains" value="C/G=2-121"/>
</dbReference>
<dbReference type="PDB" id="4QLC">
    <property type="method" value="X-ray"/>
    <property type="resolution" value="3.50 A"/>
    <property type="chains" value="C/G=2-124"/>
</dbReference>
<dbReference type="PDB" id="4X23">
    <property type="method" value="X-ray"/>
    <property type="resolution" value="3.50 A"/>
    <property type="chains" value="C/G/M/Q=16-117"/>
</dbReference>
<dbReference type="PDB" id="5WCU">
    <property type="method" value="X-ray"/>
    <property type="resolution" value="5.53 A"/>
    <property type="chains" value="C/G/M/Q=15-118"/>
</dbReference>
<dbReference type="PDB" id="6DZT">
    <property type="method" value="EM"/>
    <property type="resolution" value="2.99 A"/>
    <property type="chains" value="C/G=1-124"/>
</dbReference>
<dbReference type="PDB" id="6PWE">
    <property type="method" value="EM"/>
    <property type="resolution" value="3.95 A"/>
    <property type="chains" value="C/G=1-124"/>
</dbReference>
<dbReference type="PDB" id="6PWF">
    <property type="method" value="EM"/>
    <property type="resolution" value="4.07 A"/>
    <property type="chains" value="C/G=1-124"/>
</dbReference>
<dbReference type="PDB" id="7PJ1">
    <property type="method" value="NMR"/>
    <property type="chains" value="A=2-124"/>
</dbReference>
<dbReference type="PDB" id="7XYF">
    <property type="method" value="EM"/>
    <property type="resolution" value="3.80 A"/>
    <property type="chains" value="C/G=14-119"/>
</dbReference>
<dbReference type="PDB" id="7XYG">
    <property type="method" value="EM"/>
    <property type="resolution" value="5.40 A"/>
    <property type="chains" value="C/G=2-124"/>
</dbReference>
<dbReference type="PDB" id="8PP6">
    <property type="method" value="EM"/>
    <property type="resolution" value="3.18 A"/>
    <property type="chains" value="C/G=2-124"/>
</dbReference>
<dbReference type="PDB" id="8PP7">
    <property type="method" value="EM"/>
    <property type="resolution" value="2.91 A"/>
    <property type="chains" value="C/G=2-124"/>
</dbReference>
<dbReference type="PDB" id="8UX1">
    <property type="method" value="EM"/>
    <property type="resolution" value="2.50 A"/>
    <property type="chains" value="C/G=1-124"/>
</dbReference>
<dbReference type="PDB" id="9MU4">
    <property type="method" value="EM"/>
    <property type="resolution" value="3.29 A"/>
    <property type="chains" value="c/g=14-119"/>
</dbReference>
<dbReference type="PDB" id="9MU5">
    <property type="method" value="EM"/>
    <property type="resolution" value="6.30 A"/>
    <property type="chains" value="g=14-118"/>
</dbReference>
<dbReference type="PDB" id="9MU9">
    <property type="method" value="EM"/>
    <property type="resolution" value="7.80 A"/>
    <property type="chains" value="c/g=14-119"/>
</dbReference>
<dbReference type="PDBsum" id="2NQB"/>
<dbReference type="PDBsum" id="2PYO"/>
<dbReference type="PDBsum" id="4QLC"/>
<dbReference type="PDBsum" id="4X23"/>
<dbReference type="PDBsum" id="5WCU"/>
<dbReference type="PDBsum" id="6DZT"/>
<dbReference type="PDBsum" id="6PWE"/>
<dbReference type="PDBsum" id="6PWF"/>
<dbReference type="PDBsum" id="7PJ1"/>
<dbReference type="PDBsum" id="7XYF"/>
<dbReference type="PDBsum" id="7XYG"/>
<dbReference type="PDBsum" id="8PP6"/>
<dbReference type="PDBsum" id="8PP7"/>
<dbReference type="PDBsum" id="8UX1"/>
<dbReference type="PDBsum" id="9MU4"/>
<dbReference type="PDBsum" id="9MU5"/>
<dbReference type="PDBsum" id="9MU9"/>
<dbReference type="EMDB" id="EMD-17796"/>
<dbReference type="EMDB" id="EMD-17797"/>
<dbReference type="EMDB" id="EMD-20506"/>
<dbReference type="EMDB" id="EMD-20507"/>
<dbReference type="EMDB" id="EMD-33520"/>
<dbReference type="EMDB" id="EMD-33521"/>
<dbReference type="EMDB" id="EMD-42685"/>
<dbReference type="EMDB" id="EMD-48619"/>
<dbReference type="EMDB" id="EMD-48620"/>
<dbReference type="EMDB" id="EMD-48626"/>
<dbReference type="EMDB" id="EMD-8938"/>
<dbReference type="SASBDB" id="P84051"/>
<dbReference type="SMR" id="P84051"/>
<dbReference type="BioGRID" id="534102">
    <property type="interactions" value="1"/>
</dbReference>
<dbReference type="BioGRID" id="77146">
    <property type="interactions" value="35"/>
</dbReference>
<dbReference type="DIP" id="DIP-29504N"/>
<dbReference type="FunCoup" id="P84051">
    <property type="interactions" value="572"/>
</dbReference>
<dbReference type="IntAct" id="P84051">
    <property type="interactions" value="13"/>
</dbReference>
<dbReference type="MINT" id="P84051"/>
<dbReference type="STRING" id="7227.FBpp0085249"/>
<dbReference type="iPTMnet" id="P84051"/>
<dbReference type="PaxDb" id="7227-FBpp0085249"/>
<dbReference type="ABCD" id="P84051">
    <property type="antibodies" value="1 sequenced antibody"/>
</dbReference>
<dbReference type="EnsemblMetazoa" id="FBtr0085893">
    <property type="protein sequence ID" value="FBpp0085249"/>
    <property type="gene ID" value="FBgn0051618"/>
</dbReference>
<dbReference type="EnsemblMetazoa" id="FBtr0091812">
    <property type="protein sequence ID" value="FBpp0091055"/>
    <property type="gene ID" value="FBgn0053808"/>
</dbReference>
<dbReference type="EnsemblMetazoa" id="FBtr0091818">
    <property type="protein sequence ID" value="FBpp0091060"/>
    <property type="gene ID" value="FBgn0053814"/>
</dbReference>
<dbReference type="EnsemblMetazoa" id="FBtr0091821">
    <property type="protein sequence ID" value="FBpp0091063"/>
    <property type="gene ID" value="FBgn0053817"/>
</dbReference>
<dbReference type="EnsemblMetazoa" id="FBtr0091824">
    <property type="protein sequence ID" value="FBpp0091066"/>
    <property type="gene ID" value="FBgn0053820"/>
</dbReference>
<dbReference type="EnsemblMetazoa" id="FBtr0091827">
    <property type="protein sequence ID" value="FBpp0091069"/>
    <property type="gene ID" value="FBgn0053823"/>
</dbReference>
<dbReference type="EnsemblMetazoa" id="FBtr0091830">
    <property type="protein sequence ID" value="FBpp0091072"/>
    <property type="gene ID" value="FBgn0053826"/>
</dbReference>
<dbReference type="EnsemblMetazoa" id="FBtr0091833">
    <property type="protein sequence ID" value="FBpp0091075"/>
    <property type="gene ID" value="FBgn0053829"/>
</dbReference>
<dbReference type="EnsemblMetazoa" id="FBtr0091836">
    <property type="protein sequence ID" value="FBpp0091078"/>
    <property type="gene ID" value="FBgn0053832"/>
</dbReference>
<dbReference type="EnsemblMetazoa" id="FBtr0091839">
    <property type="protein sequence ID" value="FBpp0091081"/>
    <property type="gene ID" value="FBgn0053835"/>
</dbReference>
<dbReference type="EnsemblMetazoa" id="FBtr0091842">
    <property type="protein sequence ID" value="FBpp0091084"/>
    <property type="gene ID" value="FBgn0053838"/>
</dbReference>
<dbReference type="EnsemblMetazoa" id="FBtr0091845">
    <property type="protein sequence ID" value="FBpp0091087"/>
    <property type="gene ID" value="FBgn0053841"/>
</dbReference>
<dbReference type="EnsemblMetazoa" id="FBtr0091848">
    <property type="protein sequence ID" value="FBpp0091090"/>
    <property type="gene ID" value="FBgn0053844"/>
</dbReference>
<dbReference type="EnsemblMetazoa" id="FBtr0091851">
    <property type="protein sequence ID" value="FBpp0091093"/>
    <property type="gene ID" value="FBgn0053847"/>
</dbReference>
<dbReference type="EnsemblMetazoa" id="FBtr0091854">
    <property type="protein sequence ID" value="FBpp0091096"/>
    <property type="gene ID" value="FBgn0053850"/>
</dbReference>
<dbReference type="EnsemblMetazoa" id="FBtr0091866">
    <property type="protein sequence ID" value="FBpp0091108"/>
    <property type="gene ID" value="FBgn0053862"/>
</dbReference>
<dbReference type="EnsemblMetazoa" id="FBtr0091869">
    <property type="protein sequence ID" value="FBpp0091111"/>
    <property type="gene ID" value="FBgn0053865"/>
</dbReference>
<dbReference type="GeneID" id="318855"/>
<dbReference type="GeneID" id="3771774"/>
<dbReference type="GeneID" id="3771783"/>
<dbReference type="GeneID" id="3771785"/>
<dbReference type="GeneID" id="3772148"/>
<dbReference type="GeneID" id="3772278"/>
<dbReference type="GeneID" id="3772282"/>
<dbReference type="GeneID" id="3772345"/>
<dbReference type="GeneID" id="3772351"/>
<dbReference type="GeneID" id="3772360"/>
<dbReference type="GeneID" id="3772447"/>
<dbReference type="GeneID" id="3772448"/>
<dbReference type="GeneID" id="3772505"/>
<dbReference type="GeneID" id="3772541"/>
<dbReference type="GeneID" id="3772565"/>
<dbReference type="GeneID" id="3772618"/>
<dbReference type="GeneID" id="3772632"/>
<dbReference type="KEGG" id="dme:Dmel_CG31618"/>
<dbReference type="KEGG" id="dme:Dmel_CG33808"/>
<dbReference type="KEGG" id="dme:Dmel_CG33814"/>
<dbReference type="KEGG" id="dme:Dmel_CG33817"/>
<dbReference type="KEGG" id="dme:Dmel_CG33820"/>
<dbReference type="KEGG" id="dme:Dmel_CG33823"/>
<dbReference type="KEGG" id="dme:Dmel_CG33826"/>
<dbReference type="KEGG" id="dme:Dmel_CG33829"/>
<dbReference type="KEGG" id="dme:Dmel_CG33832"/>
<dbReference type="KEGG" id="dme:Dmel_CG33835"/>
<dbReference type="KEGG" id="dme:Dmel_CG33838"/>
<dbReference type="KEGG" id="dme:Dmel_CG33841"/>
<dbReference type="KEGG" id="dme:Dmel_CG33844"/>
<dbReference type="KEGG" id="dme:Dmel_CG33847"/>
<dbReference type="KEGG" id="dme:Dmel_CG33850"/>
<dbReference type="KEGG" id="dme:Dmel_CG33862"/>
<dbReference type="KEGG" id="dme:Dmel_CG33865"/>
<dbReference type="UCSC" id="CG31618-RA">
    <property type="organism name" value="d. melanogaster"/>
</dbReference>
<dbReference type="AGR" id="FB:FBgn0001196"/>
<dbReference type="AGR" id="FB:FBgn0051618"/>
<dbReference type="AGR" id="FB:FBgn0053808"/>
<dbReference type="AGR" id="FB:FBgn0053814"/>
<dbReference type="AGR" id="FB:FBgn0053817"/>
<dbReference type="AGR" id="FB:FBgn0053820"/>
<dbReference type="AGR" id="FB:FBgn0053823"/>
<dbReference type="AGR" id="FB:FBgn0053826"/>
<dbReference type="AGR" id="FB:FBgn0053829"/>
<dbReference type="AGR" id="FB:FBgn0053832"/>
<dbReference type="AGR" id="FB:FBgn0053835"/>
<dbReference type="AGR" id="FB:FBgn0053838"/>
<dbReference type="AGR" id="FB:FBgn0053841"/>
<dbReference type="AGR" id="FB:FBgn0053844"/>
<dbReference type="AGR" id="FB:FBgn0053847"/>
<dbReference type="AGR" id="FB:FBgn0053850"/>
<dbReference type="AGR" id="FB:FBgn0053862"/>
<dbReference type="AGR" id="FB:FBgn0053865"/>
<dbReference type="CTD" id="318855"/>
<dbReference type="CTD" id="3771774"/>
<dbReference type="CTD" id="3771783"/>
<dbReference type="CTD" id="3771785"/>
<dbReference type="CTD" id="3772148"/>
<dbReference type="CTD" id="3772278"/>
<dbReference type="CTD" id="3772282"/>
<dbReference type="CTD" id="3772345"/>
<dbReference type="CTD" id="3772351"/>
<dbReference type="CTD" id="3772360"/>
<dbReference type="CTD" id="3772447"/>
<dbReference type="CTD" id="3772448"/>
<dbReference type="CTD" id="3772505"/>
<dbReference type="CTD" id="3772541"/>
<dbReference type="CTD" id="3772565"/>
<dbReference type="CTD" id="3772618"/>
<dbReference type="CTD" id="3772632"/>
<dbReference type="FlyBase" id="FBgn0001196">
    <property type="gene designation" value="His2A"/>
</dbReference>
<dbReference type="FlyBase" id="FBgn0051618">
    <property type="gene designation" value="His2A:CG31618"/>
</dbReference>
<dbReference type="FlyBase" id="FBgn0053808">
    <property type="gene designation" value="His2A:CG33808"/>
</dbReference>
<dbReference type="FlyBase" id="FBgn0053814">
    <property type="gene designation" value="His2A:CG33814"/>
</dbReference>
<dbReference type="FlyBase" id="FBgn0053817">
    <property type="gene designation" value="His2A:CG33817"/>
</dbReference>
<dbReference type="FlyBase" id="FBgn0053820">
    <property type="gene designation" value="His2A:CG33820"/>
</dbReference>
<dbReference type="FlyBase" id="FBgn0053823">
    <property type="gene designation" value="His2A:CG33823"/>
</dbReference>
<dbReference type="FlyBase" id="FBgn0053826">
    <property type="gene designation" value="His2A:CG33826"/>
</dbReference>
<dbReference type="FlyBase" id="FBgn0053829">
    <property type="gene designation" value="His2A:CG33829"/>
</dbReference>
<dbReference type="FlyBase" id="FBgn0053832">
    <property type="gene designation" value="His2A:CG33832"/>
</dbReference>
<dbReference type="FlyBase" id="FBgn0053835">
    <property type="gene designation" value="His2A:CG33835"/>
</dbReference>
<dbReference type="FlyBase" id="FBgn0053838">
    <property type="gene designation" value="His2A:CG33838"/>
</dbReference>
<dbReference type="FlyBase" id="FBgn0053841">
    <property type="gene designation" value="His2A:CG33841"/>
</dbReference>
<dbReference type="FlyBase" id="FBgn0053844">
    <property type="gene designation" value="His2A:CG33844"/>
</dbReference>
<dbReference type="FlyBase" id="FBgn0053847">
    <property type="gene designation" value="His2A:CG33847"/>
</dbReference>
<dbReference type="FlyBase" id="FBgn0053850">
    <property type="gene designation" value="His2A:CG33850"/>
</dbReference>
<dbReference type="FlyBase" id="FBgn0053862">
    <property type="gene designation" value="His2A:CG33862"/>
</dbReference>
<dbReference type="FlyBase" id="FBgn0053865">
    <property type="gene designation" value="His2A:CG33865"/>
</dbReference>
<dbReference type="VEuPathDB" id="VectorBase:FBgn0051618"/>
<dbReference type="VEuPathDB" id="VectorBase:FBgn0053808"/>
<dbReference type="VEuPathDB" id="VectorBase:FBgn0053814"/>
<dbReference type="VEuPathDB" id="VectorBase:FBgn0053817"/>
<dbReference type="VEuPathDB" id="VectorBase:FBgn0053820"/>
<dbReference type="VEuPathDB" id="VectorBase:FBgn0053823"/>
<dbReference type="VEuPathDB" id="VectorBase:FBgn0053826"/>
<dbReference type="VEuPathDB" id="VectorBase:FBgn0053829"/>
<dbReference type="VEuPathDB" id="VectorBase:FBgn0053832"/>
<dbReference type="VEuPathDB" id="VectorBase:FBgn0053835"/>
<dbReference type="VEuPathDB" id="VectorBase:FBgn0053838"/>
<dbReference type="VEuPathDB" id="VectorBase:FBgn0053841"/>
<dbReference type="VEuPathDB" id="VectorBase:FBgn0053844"/>
<dbReference type="VEuPathDB" id="VectorBase:FBgn0053847"/>
<dbReference type="VEuPathDB" id="VectorBase:FBgn0053850"/>
<dbReference type="VEuPathDB" id="VectorBase:FBgn0053862"/>
<dbReference type="VEuPathDB" id="VectorBase:FBgn0053865"/>
<dbReference type="eggNOG" id="KOG1756">
    <property type="taxonomic scope" value="Eukaryota"/>
</dbReference>
<dbReference type="GeneTree" id="ENSGT00940000164494"/>
<dbReference type="HOGENOM" id="CLU_062828_3_3_1"/>
<dbReference type="InParanoid" id="P84051"/>
<dbReference type="OMA" id="HSMIANQ"/>
<dbReference type="OrthoDB" id="7839361at2759"/>
<dbReference type="PhylomeDB" id="P84051"/>
<dbReference type="Reactome" id="R-DME-201722">
    <property type="pathway name" value="Formation of the beta-catenin:TCF transactivating complex"/>
</dbReference>
<dbReference type="Reactome" id="R-DME-212300">
    <property type="pathway name" value="PRC2 methylates histones and DNA"/>
</dbReference>
<dbReference type="Reactome" id="R-DME-2299718">
    <property type="pathway name" value="Condensation of Prophase Chromosomes"/>
</dbReference>
<dbReference type="Reactome" id="R-DME-2559580">
    <property type="pathway name" value="Oxidative Stress Induced Senescence"/>
</dbReference>
<dbReference type="Reactome" id="R-DME-2559582">
    <property type="pathway name" value="Senescence-Associated Secretory Phenotype (SASP)"/>
</dbReference>
<dbReference type="Reactome" id="R-DME-3214815">
    <property type="pathway name" value="HDACs deacetylate histones"/>
</dbReference>
<dbReference type="Reactome" id="R-DME-3214847">
    <property type="pathway name" value="HATs acetylate histones"/>
</dbReference>
<dbReference type="Reactome" id="R-DME-3214858">
    <property type="pathway name" value="RMTs methylate histone arginines"/>
</dbReference>
<dbReference type="Reactome" id="R-DME-427359">
    <property type="pathway name" value="SIRT1 negatively regulates rRNA expression"/>
</dbReference>
<dbReference type="Reactome" id="R-DME-427413">
    <property type="pathway name" value="NoRC negatively regulates rRNA expression"/>
</dbReference>
<dbReference type="Reactome" id="R-DME-5578749">
    <property type="pathway name" value="Transcriptional regulation by small RNAs"/>
</dbReference>
<dbReference type="Reactome" id="R-DME-5625886">
    <property type="pathway name" value="Activated PKN1 stimulates transcription of AR (androgen receptor) regulated genes KLK2 and KLK3"/>
</dbReference>
<dbReference type="Reactome" id="R-DME-5689603">
    <property type="pathway name" value="UCH proteinases"/>
</dbReference>
<dbReference type="Reactome" id="R-DME-5689880">
    <property type="pathway name" value="Ub-specific processing proteases"/>
</dbReference>
<dbReference type="Reactome" id="R-DME-5689901">
    <property type="pathway name" value="Metalloprotease DUBs"/>
</dbReference>
<dbReference type="Reactome" id="R-DME-5693565">
    <property type="pathway name" value="Recruitment and ATM-mediated phosphorylation of repair and signaling proteins at DNA double strand breaks"/>
</dbReference>
<dbReference type="Reactome" id="R-DME-68616">
    <property type="pathway name" value="Assembly of the ORC complex at the origin of replication"/>
</dbReference>
<dbReference type="Reactome" id="R-DME-73772">
    <property type="pathway name" value="RNA Polymerase I Promoter Escape"/>
</dbReference>
<dbReference type="Reactome" id="R-DME-8936459">
    <property type="pathway name" value="RUNX1 regulates genes involved in megakaryocyte differentiation and platelet function"/>
</dbReference>
<dbReference type="Reactome" id="R-DME-9018519">
    <property type="pathway name" value="Estrogen-dependent gene expression"/>
</dbReference>
<dbReference type="Reactome" id="R-DME-9841922">
    <property type="pathway name" value="MLL4 and MLL3 complexes regulate expression of PPARG target genes in adipogenesis and hepatic steatosis"/>
</dbReference>
<dbReference type="Reactome" id="R-DME-9843940">
    <property type="pathway name" value="Regulation of endogenous retroelements by KRAB-ZFP proteins"/>
</dbReference>
<dbReference type="SignaLink" id="P84051"/>
<dbReference type="ChiTaRS" id="His2Av">
    <property type="organism name" value="fly"/>
</dbReference>
<dbReference type="EvolutionaryTrace" id="P84051"/>
<dbReference type="PRO" id="PR:P84051"/>
<dbReference type="Proteomes" id="UP000000803">
    <property type="component" value="Chromosome 2L"/>
</dbReference>
<dbReference type="Bgee" id="FBgn0051618">
    <property type="expression patterns" value="Expressed in ovary and 11 other cell types or tissues"/>
</dbReference>
<dbReference type="GO" id="GO:0005694">
    <property type="term" value="C:chromosome"/>
    <property type="evidence" value="ECO:0000314"/>
    <property type="project" value="FlyBase"/>
</dbReference>
<dbReference type="GO" id="GO:0000786">
    <property type="term" value="C:nucleosome"/>
    <property type="evidence" value="ECO:0000250"/>
    <property type="project" value="FlyBase"/>
</dbReference>
<dbReference type="GO" id="GO:0005634">
    <property type="term" value="C:nucleus"/>
    <property type="evidence" value="ECO:0000314"/>
    <property type="project" value="FlyBase"/>
</dbReference>
<dbReference type="GO" id="GO:0005700">
    <property type="term" value="C:polytene chromosome"/>
    <property type="evidence" value="ECO:0000314"/>
    <property type="project" value="FlyBase"/>
</dbReference>
<dbReference type="GO" id="GO:0005704">
    <property type="term" value="C:polytene chromosome band"/>
    <property type="evidence" value="ECO:0000314"/>
    <property type="project" value="FlyBase"/>
</dbReference>
<dbReference type="GO" id="GO:0003677">
    <property type="term" value="F:DNA binding"/>
    <property type="evidence" value="ECO:0000250"/>
    <property type="project" value="FlyBase"/>
</dbReference>
<dbReference type="GO" id="GO:0046982">
    <property type="term" value="F:protein heterodimerization activity"/>
    <property type="evidence" value="ECO:0007669"/>
    <property type="project" value="InterPro"/>
</dbReference>
<dbReference type="GO" id="GO:0030527">
    <property type="term" value="F:structural constituent of chromatin"/>
    <property type="evidence" value="ECO:0000318"/>
    <property type="project" value="GO_Central"/>
</dbReference>
<dbReference type="GO" id="GO:0006325">
    <property type="term" value="P:chromatin organization"/>
    <property type="evidence" value="ECO:0000250"/>
    <property type="project" value="FlyBase"/>
</dbReference>
<dbReference type="GO" id="GO:0031507">
    <property type="term" value="P:heterochromatin formation"/>
    <property type="evidence" value="ECO:0000318"/>
    <property type="project" value="GO_Central"/>
</dbReference>
<dbReference type="GO" id="GO:0007526">
    <property type="term" value="P:larval somatic muscle development"/>
    <property type="evidence" value="ECO:0000315"/>
    <property type="project" value="FlyBase"/>
</dbReference>
<dbReference type="GO" id="GO:0006334">
    <property type="term" value="P:nucleosome assembly"/>
    <property type="evidence" value="ECO:0000303"/>
    <property type="project" value="UniProtKB"/>
</dbReference>
<dbReference type="CDD" id="cd00074">
    <property type="entry name" value="HFD_H2A"/>
    <property type="match status" value="1"/>
</dbReference>
<dbReference type="DisProt" id="DP01546"/>
<dbReference type="FunFam" id="1.10.20.10:FF:000173">
    <property type="entry name" value="Histone H2A"/>
    <property type="match status" value="1"/>
</dbReference>
<dbReference type="Gene3D" id="1.10.20.10">
    <property type="entry name" value="Histone, subunit A"/>
    <property type="match status" value="1"/>
</dbReference>
<dbReference type="InterPro" id="IPR009072">
    <property type="entry name" value="Histone-fold"/>
</dbReference>
<dbReference type="InterPro" id="IPR002119">
    <property type="entry name" value="Histone_H2A"/>
</dbReference>
<dbReference type="InterPro" id="IPR007125">
    <property type="entry name" value="Histone_H2A/H2B/H3"/>
</dbReference>
<dbReference type="InterPro" id="IPR032454">
    <property type="entry name" value="Histone_H2A_C"/>
</dbReference>
<dbReference type="InterPro" id="IPR032458">
    <property type="entry name" value="Histone_H2A_CS"/>
</dbReference>
<dbReference type="PANTHER" id="PTHR23430">
    <property type="entry name" value="HISTONE H2A"/>
    <property type="match status" value="1"/>
</dbReference>
<dbReference type="Pfam" id="PF00125">
    <property type="entry name" value="Histone"/>
    <property type="match status" value="1"/>
</dbReference>
<dbReference type="Pfam" id="PF16211">
    <property type="entry name" value="Histone_H2A_C"/>
    <property type="match status" value="1"/>
</dbReference>
<dbReference type="PRINTS" id="PR00620">
    <property type="entry name" value="HISTONEH2A"/>
</dbReference>
<dbReference type="SMART" id="SM00414">
    <property type="entry name" value="H2A"/>
    <property type="match status" value="1"/>
</dbReference>
<dbReference type="SUPFAM" id="SSF47113">
    <property type="entry name" value="Histone-fold"/>
    <property type="match status" value="1"/>
</dbReference>
<dbReference type="PROSITE" id="PS00046">
    <property type="entry name" value="HISTONE_H2A"/>
    <property type="match status" value="1"/>
</dbReference>
<organism>
    <name type="scientific">Drosophila melanogaster</name>
    <name type="common">Fruit fly</name>
    <dbReference type="NCBI Taxonomy" id="7227"/>
    <lineage>
        <taxon>Eukaryota</taxon>
        <taxon>Metazoa</taxon>
        <taxon>Ecdysozoa</taxon>
        <taxon>Arthropoda</taxon>
        <taxon>Hexapoda</taxon>
        <taxon>Insecta</taxon>
        <taxon>Pterygota</taxon>
        <taxon>Neoptera</taxon>
        <taxon>Endopterygota</taxon>
        <taxon>Diptera</taxon>
        <taxon>Brachycera</taxon>
        <taxon>Muscomorpha</taxon>
        <taxon>Ephydroidea</taxon>
        <taxon>Drosophilidae</taxon>
        <taxon>Drosophila</taxon>
        <taxon>Sophophora</taxon>
    </lineage>
</organism>
<comment type="function">
    <text>Core component of nucleosome. Nucleosomes wrap and compact DNA into chromatin, limiting DNA accessibility to the cellular machineries which require DNA as a template. Histones thereby play a central role in transcription regulation, DNA repair, DNA replication and chromosomal stability. DNA accessibility is regulated via a complex set of post-translational modifications of histones, also called histone code, and nucleosome remodeling.</text>
</comment>
<comment type="subunit">
    <text>The nucleosome is a histone octamer containing two molecules each of H2A, H2B, H3 and H4 assembled in one H3-H4 heterotetramer and two H2A-H2B heterodimers. The octamer wraps approximately 147 bp of DNA.</text>
</comment>
<comment type="interaction">
    <interactant intactId="EBI-182580">
        <id>P84051</id>
    </interactant>
    <interactant intactId="EBI-129287">
        <id>Q9V6Q2</id>
        <label>cid</label>
    </interactant>
    <organismsDiffer>false</organismsDiffer>
    <experiments>2</experiments>
</comment>
<comment type="subcellular location">
    <subcellularLocation>
        <location>Nucleus</location>
    </subcellularLocation>
    <subcellularLocation>
        <location>Chromosome</location>
    </subcellularLocation>
</comment>
<comment type="PTM">
    <text evidence="3 4 6">The chromatin-associated form, but not the free cytoplasmic form, is phosphorylated on Thr-120 by NHK-1 during mitosis, and dephosphorylated during S-phase. Also phosphorylated on Thr-120 by NHK-1 during prophase I of meiosis; which is required for acetylation of H3 'Lys-14' and H4 'Lys-5', diassembly of the synaptonemal complex, and karyosome formation.</text>
</comment>
<comment type="PTM">
    <text evidence="5 7 9 10">Monoubiquitination of Lys-119 by sce/dRING gives a specific tag for epigenetic transcriptional repression (PubMed:15386022). Deubiquitinated by the polycomb repressive deubiquitinase (PR-DUB) complex (PubMed:20436459, PubMed:30258054, PubMed:30639226).</text>
</comment>
<comment type="PTM">
    <text evidence="1">Phosphorylation on Ser-2 is enhanced during mitosis. Phosphorylation on Ser-2 directly represses transcription (By similarity).</text>
</comment>
<comment type="similarity">
    <text evidence="11">Belongs to the histone H2A family.</text>
</comment>
<protein>
    <recommendedName>
        <fullName>Histone H2A</fullName>
    </recommendedName>
</protein>
<reference key="1">
    <citation type="journal article" date="1989" name="Nucleic Acids Res.">
        <title>tRNA derived insertion element in histone gene repeating unit of Drosophila melanogaster.</title>
        <authorList>
            <person name="Matsuo Y."/>
            <person name="Yamazaki T."/>
        </authorList>
    </citation>
    <scope>NUCLEOTIDE SEQUENCE [GENOMIC DNA] (HIS2A)</scope>
    <source>
        <strain>AK-194</strain>
    </source>
</reference>
<reference key="2">
    <citation type="journal article" date="2000" name="Science">
        <title>The genome sequence of Drosophila melanogaster.</title>
        <authorList>
            <person name="Adams M.D."/>
            <person name="Celniker S.E."/>
            <person name="Holt R.A."/>
            <person name="Evans C.A."/>
            <person name="Gocayne J.D."/>
            <person name="Amanatides P.G."/>
            <person name="Scherer S.E."/>
            <person name="Li P.W."/>
            <person name="Hoskins R.A."/>
            <person name="Galle R.F."/>
            <person name="George R.A."/>
            <person name="Lewis S.E."/>
            <person name="Richards S."/>
            <person name="Ashburner M."/>
            <person name="Henderson S.N."/>
            <person name="Sutton G.G."/>
            <person name="Wortman J.R."/>
            <person name="Yandell M.D."/>
            <person name="Zhang Q."/>
            <person name="Chen L.X."/>
            <person name="Brandon R.C."/>
            <person name="Rogers Y.-H.C."/>
            <person name="Blazej R.G."/>
            <person name="Champe M."/>
            <person name="Pfeiffer B.D."/>
            <person name="Wan K.H."/>
            <person name="Doyle C."/>
            <person name="Baxter E.G."/>
            <person name="Helt G."/>
            <person name="Nelson C.R."/>
            <person name="Miklos G.L.G."/>
            <person name="Abril J.F."/>
            <person name="Agbayani A."/>
            <person name="An H.-J."/>
            <person name="Andrews-Pfannkoch C."/>
            <person name="Baldwin D."/>
            <person name="Ballew R.M."/>
            <person name="Basu A."/>
            <person name="Baxendale J."/>
            <person name="Bayraktaroglu L."/>
            <person name="Beasley E.M."/>
            <person name="Beeson K.Y."/>
            <person name="Benos P.V."/>
            <person name="Berman B.P."/>
            <person name="Bhandari D."/>
            <person name="Bolshakov S."/>
            <person name="Borkova D."/>
            <person name="Botchan M.R."/>
            <person name="Bouck J."/>
            <person name="Brokstein P."/>
            <person name="Brottier P."/>
            <person name="Burtis K.C."/>
            <person name="Busam D.A."/>
            <person name="Butler H."/>
            <person name="Cadieu E."/>
            <person name="Center A."/>
            <person name="Chandra I."/>
            <person name="Cherry J.M."/>
            <person name="Cawley S."/>
            <person name="Dahlke C."/>
            <person name="Davenport L.B."/>
            <person name="Davies P."/>
            <person name="de Pablos B."/>
            <person name="Delcher A."/>
            <person name="Deng Z."/>
            <person name="Mays A.D."/>
            <person name="Dew I."/>
            <person name="Dietz S.M."/>
            <person name="Dodson K."/>
            <person name="Doup L.E."/>
            <person name="Downes M."/>
            <person name="Dugan-Rocha S."/>
            <person name="Dunkov B.C."/>
            <person name="Dunn P."/>
            <person name="Durbin K.J."/>
            <person name="Evangelista C.C."/>
            <person name="Ferraz C."/>
            <person name="Ferriera S."/>
            <person name="Fleischmann W."/>
            <person name="Fosler C."/>
            <person name="Gabrielian A.E."/>
            <person name="Garg N.S."/>
            <person name="Gelbart W.M."/>
            <person name="Glasser K."/>
            <person name="Glodek A."/>
            <person name="Gong F."/>
            <person name="Gorrell J.H."/>
            <person name="Gu Z."/>
            <person name="Guan P."/>
            <person name="Harris M."/>
            <person name="Harris N.L."/>
            <person name="Harvey D.A."/>
            <person name="Heiman T.J."/>
            <person name="Hernandez J.R."/>
            <person name="Houck J."/>
            <person name="Hostin D."/>
            <person name="Houston K.A."/>
            <person name="Howland T.J."/>
            <person name="Wei M.-H."/>
            <person name="Ibegwam C."/>
            <person name="Jalali M."/>
            <person name="Kalush F."/>
            <person name="Karpen G.H."/>
            <person name="Ke Z."/>
            <person name="Kennison J.A."/>
            <person name="Ketchum K.A."/>
            <person name="Kimmel B.E."/>
            <person name="Kodira C.D."/>
            <person name="Kraft C.L."/>
            <person name="Kravitz S."/>
            <person name="Kulp D."/>
            <person name="Lai Z."/>
            <person name="Lasko P."/>
            <person name="Lei Y."/>
            <person name="Levitsky A.A."/>
            <person name="Li J.H."/>
            <person name="Li Z."/>
            <person name="Liang Y."/>
            <person name="Lin X."/>
            <person name="Liu X."/>
            <person name="Mattei B."/>
            <person name="McIntosh T.C."/>
            <person name="McLeod M.P."/>
            <person name="McPherson D."/>
            <person name="Merkulov G."/>
            <person name="Milshina N.V."/>
            <person name="Mobarry C."/>
            <person name="Morris J."/>
            <person name="Moshrefi A."/>
            <person name="Mount S.M."/>
            <person name="Moy M."/>
            <person name="Murphy B."/>
            <person name="Murphy L."/>
            <person name="Muzny D.M."/>
            <person name="Nelson D.L."/>
            <person name="Nelson D.R."/>
            <person name="Nelson K.A."/>
            <person name="Nixon K."/>
            <person name="Nusskern D.R."/>
            <person name="Pacleb J.M."/>
            <person name="Palazzolo M."/>
            <person name="Pittman G.S."/>
            <person name="Pan S."/>
            <person name="Pollard J."/>
            <person name="Puri V."/>
            <person name="Reese M.G."/>
            <person name="Reinert K."/>
            <person name="Remington K."/>
            <person name="Saunders R.D.C."/>
            <person name="Scheeler F."/>
            <person name="Shen H."/>
            <person name="Shue B.C."/>
            <person name="Siden-Kiamos I."/>
            <person name="Simpson M."/>
            <person name="Skupski M.P."/>
            <person name="Smith T.J."/>
            <person name="Spier E."/>
            <person name="Spradling A.C."/>
            <person name="Stapleton M."/>
            <person name="Strong R."/>
            <person name="Sun E."/>
            <person name="Svirskas R."/>
            <person name="Tector C."/>
            <person name="Turner R."/>
            <person name="Venter E."/>
            <person name="Wang A.H."/>
            <person name="Wang X."/>
            <person name="Wang Z.-Y."/>
            <person name="Wassarman D.A."/>
            <person name="Weinstock G.M."/>
            <person name="Weissenbach J."/>
            <person name="Williams S.M."/>
            <person name="Woodage T."/>
            <person name="Worley K.C."/>
            <person name="Wu D."/>
            <person name="Yang S."/>
            <person name="Yao Q.A."/>
            <person name="Ye J."/>
            <person name="Yeh R.-F."/>
            <person name="Zaveri J.S."/>
            <person name="Zhan M."/>
            <person name="Zhang G."/>
            <person name="Zhao Q."/>
            <person name="Zheng L."/>
            <person name="Zheng X.H."/>
            <person name="Zhong F.N."/>
            <person name="Zhong W."/>
            <person name="Zhou X."/>
            <person name="Zhu S.C."/>
            <person name="Zhu X."/>
            <person name="Smith H.O."/>
            <person name="Gibbs R.A."/>
            <person name="Myers E.W."/>
            <person name="Rubin G.M."/>
            <person name="Venter J.C."/>
        </authorList>
    </citation>
    <scope>NUCLEOTIDE SEQUENCE [LARGE SCALE GENOMIC DNA] (HIS2A:CG31618; HIS2A:CG33808; HIS2A:CG33814; HIS2A:CG33817; HIS2A:CG33820; HIS2A:CG33823; HIS2A:CG33826; HIS2A:CG33829; HIS2A:CG33832; HIS2A:CG33835; HIS2A:CG33838; HIS2A:CG33841; HIS2A:CG33844; HIS2A:CG33847; HIS2A:CG33850; HIS2A:CG33862 AND HIS2A:CG33865)</scope>
    <source>
        <strain>Berkeley</strain>
    </source>
</reference>
<reference key="3">
    <citation type="journal article" date="2002" name="Genome Biol.">
        <title>Annotation of the Drosophila melanogaster euchromatic genome: a systematic review.</title>
        <authorList>
            <person name="Misra S."/>
            <person name="Crosby M.A."/>
            <person name="Mungall C.J."/>
            <person name="Matthews B.B."/>
            <person name="Campbell K.S."/>
            <person name="Hradecky P."/>
            <person name="Huang Y."/>
            <person name="Kaminker J.S."/>
            <person name="Millburn G.H."/>
            <person name="Prochnik S.E."/>
            <person name="Smith C.D."/>
            <person name="Tupy J.L."/>
            <person name="Whitfield E.J."/>
            <person name="Bayraktaroglu L."/>
            <person name="Berman B.P."/>
            <person name="Bettencourt B.R."/>
            <person name="Celniker S.E."/>
            <person name="de Grey A.D.N.J."/>
            <person name="Drysdale R.A."/>
            <person name="Harris N.L."/>
            <person name="Richter J."/>
            <person name="Russo S."/>
            <person name="Schroeder A.J."/>
            <person name="Shu S.Q."/>
            <person name="Stapleton M."/>
            <person name="Yamada C."/>
            <person name="Ashburner M."/>
            <person name="Gelbart W.M."/>
            <person name="Rubin G.M."/>
            <person name="Lewis S.E."/>
        </authorList>
    </citation>
    <scope>GENOME REANNOTATION</scope>
    <source>
        <strain>Berkeley</strain>
    </source>
</reference>
<reference key="4">
    <citation type="journal article" date="2004" name="Genes Dev.">
        <title>Nucleosomal histone kinase-1 phosphorylates H2A Thr 119 during mitosis in the early Drosophila embryo.</title>
        <authorList>
            <person name="Aihara H."/>
            <person name="Nakagawa T."/>
            <person name="Yasui K."/>
            <person name="Ohta T."/>
            <person name="Hirose S."/>
            <person name="Dhomae N."/>
            <person name="Takio K."/>
            <person name="Kaneko M."/>
            <person name="Takeshima Y."/>
            <person name="Muramatsu M."/>
            <person name="Ito T."/>
        </authorList>
    </citation>
    <scope>PROTEIN SEQUENCE OF 96-122</scope>
    <scope>PHOSPHORYLATION AT THR-120</scope>
    <source>
        <strain>Berkeley</strain>
        <tissue>Embryo</tissue>
    </source>
</reference>
<reference key="5">
    <citation type="thesis" date="1979" institute="University of Stanford" country="United States">
        <authorList>
            <person name="Goldberg M.L."/>
        </authorList>
    </citation>
    <scope>NUCLEOTIDE SEQUENCE [GENOMIC DNA] OF 1-122 (HIS2A)</scope>
</reference>
<reference key="6">
    <citation type="journal article" date="2004" name="Chromosoma">
        <title>The enhancement of histone H4 and H2A serine 1 phosphorylation during mitosis and S-phase is evolutionarily conserved.</title>
        <authorList>
            <person name="Barber C.M."/>
            <person name="Turner F.B."/>
            <person name="Wang Y."/>
            <person name="Hagstrom K."/>
            <person name="Taverna S.D."/>
            <person name="Mollah S."/>
            <person name="Ueberheide B."/>
            <person name="Meyer B.J."/>
            <person name="Hunt D.F."/>
            <person name="Cheung P."/>
            <person name="Allis C.D."/>
        </authorList>
    </citation>
    <scope>PHOSPHORYLATION AT SER-2</scope>
</reference>
<reference key="7">
    <citation type="journal article" date="2004" name="Nature">
        <title>Role of histone H2A ubiquitination in Polycomb silencing.</title>
        <authorList>
            <person name="Wang H."/>
            <person name="Wang L."/>
            <person name="Erdjument-Bromage H."/>
            <person name="Vidal M."/>
            <person name="Tempst P."/>
            <person name="Jones R.S."/>
            <person name="Zhang Y."/>
        </authorList>
    </citation>
    <scope>UBIQUITINATION AT LYS-119</scope>
</reference>
<reference key="8">
    <citation type="journal article" date="2005" name="Genes Dev.">
        <title>A histone code in meiosis: the histone kinase, NHK-1, is required for proper chromosomal architecture in Drosophila oocytes.</title>
        <authorList>
            <person name="Ivanovska I."/>
            <person name="Khandan T."/>
            <person name="Ito T."/>
            <person name="Orr-Weaver T.L."/>
        </authorList>
    </citation>
    <scope>PHOSPHORYLATION AT THR-120</scope>
</reference>
<reference key="9">
    <citation type="journal article" date="2010" name="Nature">
        <title>Histone H2A deubiquitinase activity of the Polycomb repressive complex PR-DUB.</title>
        <authorList>
            <person name="Scheuermann J.C."/>
            <person name="de Ayala Alonso A.G."/>
            <person name="Oktaba K."/>
            <person name="Ly-Hartig N."/>
            <person name="McGinty R.K."/>
            <person name="Fraterman S."/>
            <person name="Wilm M."/>
            <person name="Muir T.W."/>
            <person name="Muller J."/>
        </authorList>
    </citation>
    <scope>DEUBIQUITINATION AT LYS-119</scope>
</reference>
<reference key="10">
    <citation type="journal article" date="2012" name="Mol. Cell. Proteomics">
        <title>Lysine succinylation and lysine malonylation in histones.</title>
        <authorList>
            <person name="Xie Z."/>
            <person name="Dai J."/>
            <person name="Dai L."/>
            <person name="Tan M."/>
            <person name="Cheng Z."/>
            <person name="Wu Y."/>
            <person name="Boeke J.D."/>
            <person name="Zhao Y."/>
        </authorList>
    </citation>
    <scope>SUCCINYLATION AT LYS-36</scope>
</reference>
<reference key="11">
    <citation type="journal article" date="2018" name="Nat. Commun.">
        <title>A bidentate Polycomb Repressive-Deubiquitinase complex is required for efficient activity on nucleosomes.</title>
        <authorList>
            <person name="Foglizzo M."/>
            <person name="Middleton A.J."/>
            <person name="Burgess A.E."/>
            <person name="Crowther J.M."/>
            <person name="Dobson R.C.J."/>
            <person name="Murphy J.M."/>
            <person name="Day C.L."/>
            <person name="Mace P.D."/>
        </authorList>
    </citation>
    <scope>DEUBIQUITINATION AT LYS-119</scope>
</reference>
<reference key="12">
    <citation type="journal article" date="2019" name="Structure">
        <title>Structural Basis for the Activation of the Deubiquitinase Calypso by the Polycomb Protein ASX.</title>
        <authorList>
            <person name="De I."/>
            <person name="Chittock E.C."/>
            <person name="Groetsch H."/>
            <person name="Miller T.C.R."/>
            <person name="McCarthy A.A."/>
            <person name="Mueller C.W."/>
        </authorList>
    </citation>
    <scope>DEUBIQUITINATION AT LYS-119</scope>
</reference>
<sequence length="124" mass="13363">MSGRGKGGKVKGKAKSRSNRAGLQFPVGRIHRLLRKGNYAERVGAGAPVYLAAVMEYLAAEVLELAGNAARDNKKTRIIPRHLQLAIRNDEELNKLLSGVTIAQGGVLPNIQAVLLPKKTEKKA</sequence>
<feature type="initiator methionine" description="Removed" evidence="1">
    <location>
        <position position="1"/>
    </location>
</feature>
<feature type="chain" id="PRO_0000055222" description="Histone H2A">
    <location>
        <begin position="2"/>
        <end position="124"/>
    </location>
</feature>
<feature type="region of interest" description="Disordered" evidence="2">
    <location>
        <begin position="1"/>
        <end position="21"/>
    </location>
</feature>
<feature type="compositionally biased region" description="Basic residues" evidence="2">
    <location>
        <begin position="1"/>
        <end position="18"/>
    </location>
</feature>
<feature type="modified residue" description="N-acetylserine" evidence="1">
    <location>
        <position position="2"/>
    </location>
</feature>
<feature type="modified residue" description="Phosphoserine" evidence="12">
    <location>
        <position position="2"/>
    </location>
</feature>
<feature type="modified residue" description="N6-succinyllysine" evidence="8">
    <location>
        <position position="36"/>
    </location>
</feature>
<feature type="modified residue" description="N5-methylglutamine" evidence="1">
    <location>
        <position position="104"/>
    </location>
</feature>
<feature type="modified residue" description="Phosphothreonine" evidence="3 6">
    <location>
        <position position="120"/>
    </location>
</feature>
<feature type="cross-link" description="Glycyl lysine isopeptide (Lys-Gly) (interchain with G-Cter in ubiquitin)" evidence="13">
    <location>
        <position position="119"/>
    </location>
</feature>
<feature type="strand" evidence="15">
    <location>
        <begin position="12"/>
        <end position="15"/>
    </location>
</feature>
<feature type="helix" evidence="14">
    <location>
        <begin position="17"/>
        <end position="21"/>
    </location>
</feature>
<feature type="helix" evidence="14">
    <location>
        <begin position="27"/>
        <end position="36"/>
    </location>
</feature>
<feature type="strand" evidence="16">
    <location>
        <begin position="37"/>
        <end position="39"/>
    </location>
</feature>
<feature type="strand" evidence="14">
    <location>
        <begin position="41"/>
        <end position="43"/>
    </location>
</feature>
<feature type="helix" evidence="14">
    <location>
        <begin position="46"/>
        <end position="72"/>
    </location>
</feature>
<feature type="strand" evidence="14">
    <location>
        <begin position="76"/>
        <end position="78"/>
    </location>
</feature>
<feature type="helix" evidence="14">
    <location>
        <begin position="80"/>
        <end position="88"/>
    </location>
</feature>
<feature type="helix" evidence="14">
    <location>
        <begin position="91"/>
        <end position="96"/>
    </location>
</feature>
<feature type="turn" evidence="14">
    <location>
        <begin position="97"/>
        <end position="99"/>
    </location>
</feature>
<feature type="strand" evidence="14">
    <location>
        <begin position="100"/>
        <end position="102"/>
    </location>
</feature>
<feature type="strand" evidence="15">
    <location>
        <begin position="110"/>
        <end position="112"/>
    </location>
</feature>
<feature type="helix" evidence="14">
    <location>
        <begin position="113"/>
        <end position="115"/>
    </location>
</feature>
<accession>P84051</accession>
<accession>P02267</accession>
<accession>Q4ABC7</accession>
<name>H2A_DROME</name>
<evidence type="ECO:0000250" key="1"/>
<evidence type="ECO:0000256" key="2">
    <source>
        <dbReference type="SAM" id="MobiDB-lite"/>
    </source>
</evidence>
<evidence type="ECO:0000269" key="3">
    <source>
    </source>
</evidence>
<evidence type="ECO:0000269" key="4">
    <source>
    </source>
</evidence>
<evidence type="ECO:0000269" key="5">
    <source>
    </source>
</evidence>
<evidence type="ECO:0000269" key="6">
    <source>
    </source>
</evidence>
<evidence type="ECO:0000269" key="7">
    <source>
    </source>
</evidence>
<evidence type="ECO:0000269" key="8">
    <source>
    </source>
</evidence>
<evidence type="ECO:0000269" key="9">
    <source>
    </source>
</evidence>
<evidence type="ECO:0000269" key="10">
    <source>
    </source>
</evidence>
<evidence type="ECO:0000305" key="11"/>
<evidence type="ECO:0000305" key="12">
    <source>
    </source>
</evidence>
<evidence type="ECO:0000305" key="13">
    <source>
    </source>
</evidence>
<evidence type="ECO:0007829" key="14">
    <source>
        <dbReference type="PDB" id="2NQB"/>
    </source>
</evidence>
<evidence type="ECO:0007829" key="15">
    <source>
        <dbReference type="PDB" id="7PJ1"/>
    </source>
</evidence>
<evidence type="ECO:0007829" key="16">
    <source>
        <dbReference type="PDB" id="8PP7"/>
    </source>
</evidence>
<gene>
    <name type="primary">His2A</name>
    <name type="synonym">H2a</name>
</gene>
<gene>
    <name type="primary">His2A:CG31618</name>
    <name type="ORF">CG31618</name>
</gene>
<gene>
    <name type="primary">His2A:CG33808</name>
    <name type="ORF">CG33808</name>
</gene>
<gene>
    <name type="primary">His2A:CG33814</name>
    <name type="ORF">CG33814</name>
</gene>
<gene>
    <name type="primary">His2A:CG33817</name>
    <name type="ORF">CG33817</name>
</gene>
<gene>
    <name type="primary">His2A:CG33820</name>
    <name type="ORF">CG33820</name>
</gene>
<gene>
    <name type="primary">His2A:CG33823</name>
    <name type="ORF">CG33823</name>
</gene>
<gene>
    <name type="primary">His2A:CG33826</name>
    <name type="ORF">CG33826</name>
</gene>
<gene>
    <name type="primary">His2A:CG33829</name>
    <name type="ORF">CG33829</name>
</gene>
<gene>
    <name type="primary">His2A:CG33832</name>
    <name type="ORF">CG33832</name>
</gene>
<gene>
    <name type="primary">His2A:CG33835</name>
    <name type="ORF">CG33835</name>
</gene>
<gene>
    <name type="primary">His2A:CG33838</name>
    <name type="ORF">CG33838</name>
</gene>
<gene>
    <name type="primary">His2A:CG33841</name>
    <name type="ORF">CG33841</name>
</gene>
<gene>
    <name type="primary">His2A:CG33844</name>
    <name type="ORF">CG33844</name>
</gene>
<gene>
    <name type="primary">His2A:CG33847</name>
    <name type="ORF">CG33847</name>
</gene>
<gene>
    <name type="primary">His2A:CG33850</name>
    <name type="ORF">CG33850</name>
</gene>
<gene>
    <name type="primary">His2A:CG33862</name>
    <name type="ORF">CG33862</name>
</gene>
<gene>
    <name type="primary">His2A:CG33865</name>
    <name type="ORF">CG33865</name>
</gene>
<proteinExistence type="evidence at protein level"/>
<keyword id="KW-0002">3D-structure</keyword>
<keyword id="KW-0007">Acetylation</keyword>
<keyword id="KW-0158">Chromosome</keyword>
<keyword id="KW-0903">Direct protein sequencing</keyword>
<keyword id="KW-0238">DNA-binding</keyword>
<keyword id="KW-1017">Isopeptide bond</keyword>
<keyword id="KW-0488">Methylation</keyword>
<keyword id="KW-0544">Nucleosome core</keyword>
<keyword id="KW-0539">Nucleus</keyword>
<keyword id="KW-0597">Phosphoprotein</keyword>
<keyword id="KW-1185">Reference proteome</keyword>
<keyword id="KW-0832">Ubl conjugation</keyword>